<reference key="1">
    <citation type="journal article" date="2006" name="BMC Genomics">
        <title>Complete genome sequence of Shigella flexneri 5b and comparison with Shigella flexneri 2a.</title>
        <authorList>
            <person name="Nie H."/>
            <person name="Yang F."/>
            <person name="Zhang X."/>
            <person name="Yang J."/>
            <person name="Chen L."/>
            <person name="Wang J."/>
            <person name="Xiong Z."/>
            <person name="Peng J."/>
            <person name="Sun L."/>
            <person name="Dong J."/>
            <person name="Xue Y."/>
            <person name="Xu X."/>
            <person name="Chen S."/>
            <person name="Yao Z."/>
            <person name="Shen Y."/>
            <person name="Jin Q."/>
        </authorList>
    </citation>
    <scope>NUCLEOTIDE SEQUENCE [LARGE SCALE GENOMIC DNA]</scope>
    <source>
        <strain>8401</strain>
    </source>
</reference>
<name>LPXA_SHIF8</name>
<organism>
    <name type="scientific">Shigella flexneri serotype 5b (strain 8401)</name>
    <dbReference type="NCBI Taxonomy" id="373384"/>
    <lineage>
        <taxon>Bacteria</taxon>
        <taxon>Pseudomonadati</taxon>
        <taxon>Pseudomonadota</taxon>
        <taxon>Gammaproteobacteria</taxon>
        <taxon>Enterobacterales</taxon>
        <taxon>Enterobacteriaceae</taxon>
        <taxon>Shigella</taxon>
    </lineage>
</organism>
<proteinExistence type="inferred from homology"/>
<evidence type="ECO:0000255" key="1">
    <source>
        <dbReference type="HAMAP-Rule" id="MF_00387"/>
    </source>
</evidence>
<keyword id="KW-0012">Acyltransferase</keyword>
<keyword id="KW-0963">Cytoplasm</keyword>
<keyword id="KW-0441">Lipid A biosynthesis</keyword>
<keyword id="KW-0444">Lipid biosynthesis</keyword>
<keyword id="KW-0443">Lipid metabolism</keyword>
<keyword id="KW-0677">Repeat</keyword>
<keyword id="KW-0808">Transferase</keyword>
<gene>
    <name evidence="1" type="primary">lpxA</name>
    <name type="ordered locus">SFV_0164</name>
</gene>
<accession>Q0T828</accession>
<dbReference type="EC" id="2.3.1.129" evidence="1"/>
<dbReference type="EMBL" id="CP000266">
    <property type="protein sequence ID" value="ABF02448.1"/>
    <property type="molecule type" value="Genomic_DNA"/>
</dbReference>
<dbReference type="RefSeq" id="WP_000565970.1">
    <property type="nucleotide sequence ID" value="NC_008258.1"/>
</dbReference>
<dbReference type="SMR" id="Q0T828"/>
<dbReference type="KEGG" id="sfv:SFV_0164"/>
<dbReference type="HOGENOM" id="CLU_061249_0_0_6"/>
<dbReference type="UniPathway" id="UPA00359">
    <property type="reaction ID" value="UER00477"/>
</dbReference>
<dbReference type="Proteomes" id="UP000000659">
    <property type="component" value="Chromosome"/>
</dbReference>
<dbReference type="GO" id="GO:0005737">
    <property type="term" value="C:cytoplasm"/>
    <property type="evidence" value="ECO:0007669"/>
    <property type="project" value="UniProtKB-SubCell"/>
</dbReference>
<dbReference type="GO" id="GO:0016020">
    <property type="term" value="C:membrane"/>
    <property type="evidence" value="ECO:0007669"/>
    <property type="project" value="GOC"/>
</dbReference>
<dbReference type="GO" id="GO:0008780">
    <property type="term" value="F:acyl-[acyl-carrier-protein]-UDP-N-acetylglucosamine O-acyltransferase activity"/>
    <property type="evidence" value="ECO:0007669"/>
    <property type="project" value="UniProtKB-UniRule"/>
</dbReference>
<dbReference type="GO" id="GO:0009245">
    <property type="term" value="P:lipid A biosynthetic process"/>
    <property type="evidence" value="ECO:0007669"/>
    <property type="project" value="UniProtKB-UniRule"/>
</dbReference>
<dbReference type="CDD" id="cd03351">
    <property type="entry name" value="LbH_UDP-GlcNAc_AT"/>
    <property type="match status" value="1"/>
</dbReference>
<dbReference type="FunFam" id="1.20.1180.10:FF:000001">
    <property type="entry name" value="Acyl-[acyl-carrier-protein]--UDP-N-acetylglucosamine O-acyltransferase"/>
    <property type="match status" value="1"/>
</dbReference>
<dbReference type="FunFam" id="2.160.10.10:FF:000003">
    <property type="entry name" value="Acyl-[acyl-carrier-protein]--UDP-N-acetylglucosamine O-acyltransferase"/>
    <property type="match status" value="1"/>
</dbReference>
<dbReference type="Gene3D" id="2.160.10.10">
    <property type="entry name" value="Hexapeptide repeat proteins"/>
    <property type="match status" value="1"/>
</dbReference>
<dbReference type="Gene3D" id="1.20.1180.10">
    <property type="entry name" value="Udp N-acetylglucosamine O-acyltransferase, C-terminal domain"/>
    <property type="match status" value="1"/>
</dbReference>
<dbReference type="HAMAP" id="MF_00387">
    <property type="entry name" value="LpxA"/>
    <property type="match status" value="1"/>
</dbReference>
<dbReference type="InterPro" id="IPR029098">
    <property type="entry name" value="Acetyltransf_C"/>
</dbReference>
<dbReference type="InterPro" id="IPR037157">
    <property type="entry name" value="Acetyltransf_C_sf"/>
</dbReference>
<dbReference type="InterPro" id="IPR001451">
    <property type="entry name" value="Hexapep"/>
</dbReference>
<dbReference type="InterPro" id="IPR018357">
    <property type="entry name" value="Hexapep_transf_CS"/>
</dbReference>
<dbReference type="InterPro" id="IPR010137">
    <property type="entry name" value="Lipid_A_LpxA"/>
</dbReference>
<dbReference type="InterPro" id="IPR011004">
    <property type="entry name" value="Trimer_LpxA-like_sf"/>
</dbReference>
<dbReference type="NCBIfam" id="TIGR01852">
    <property type="entry name" value="lipid_A_lpxA"/>
    <property type="match status" value="1"/>
</dbReference>
<dbReference type="NCBIfam" id="NF003657">
    <property type="entry name" value="PRK05289.1"/>
    <property type="match status" value="1"/>
</dbReference>
<dbReference type="PANTHER" id="PTHR43480">
    <property type="entry name" value="ACYL-[ACYL-CARRIER-PROTEIN]--UDP-N-ACETYLGLUCOSAMINE O-ACYLTRANSFERASE"/>
    <property type="match status" value="1"/>
</dbReference>
<dbReference type="PANTHER" id="PTHR43480:SF1">
    <property type="entry name" value="ACYL-[ACYL-CARRIER-PROTEIN]--UDP-N-ACETYLGLUCOSAMINE O-ACYLTRANSFERASE, MITOCHONDRIAL-RELATED"/>
    <property type="match status" value="1"/>
</dbReference>
<dbReference type="Pfam" id="PF13720">
    <property type="entry name" value="Acetyltransf_11"/>
    <property type="match status" value="1"/>
</dbReference>
<dbReference type="Pfam" id="PF00132">
    <property type="entry name" value="Hexapep"/>
    <property type="match status" value="2"/>
</dbReference>
<dbReference type="PIRSF" id="PIRSF000456">
    <property type="entry name" value="UDP-GlcNAc_acltr"/>
    <property type="match status" value="1"/>
</dbReference>
<dbReference type="SUPFAM" id="SSF51161">
    <property type="entry name" value="Trimeric LpxA-like enzymes"/>
    <property type="match status" value="1"/>
</dbReference>
<dbReference type="PROSITE" id="PS00101">
    <property type="entry name" value="HEXAPEP_TRANSFERASES"/>
    <property type="match status" value="2"/>
</dbReference>
<feature type="chain" id="PRO_0000302603" description="Acyl-[acyl-carrier-protein]--UDP-N-acetylglucosamine O-acyltransferase">
    <location>
        <begin position="1"/>
        <end position="262"/>
    </location>
</feature>
<protein>
    <recommendedName>
        <fullName evidence="1">Acyl-[acyl-carrier-protein]--UDP-N-acetylglucosamine O-acyltransferase</fullName>
        <shortName evidence="1">UDP-N-acetylglucosamine acyltransferase</shortName>
        <ecNumber evidence="1">2.3.1.129</ecNumber>
    </recommendedName>
</protein>
<sequence>MIDKSAFVHPTAIVEEGASIGANAHIGPFCIVGPHVEIGEGTVLKSHVVVNGHTKIGRDNEIYQFASIGEVNQDLKYAGEPTRVEIGDRNRIRESVTIHRGTVQGGGLTKVGSDNLLMINAHIAHDCTVGNRCILANNATLAGHVSVDDFAIIGGMTAVHQFCIIGAHVMVGGCSGVAQDVPPYVIAQGNHATPFGVNTEGLKRRGFSREAITAIRNAYKLIYRSGKTLDEVKPEIAELAETYPEVKAFTDFFARSTRGLIR</sequence>
<comment type="function">
    <text evidence="1">Involved in the biosynthesis of lipid A, a phosphorylated glycolipid that anchors the lipopolysaccharide to the outer membrane of the cell.</text>
</comment>
<comment type="catalytic activity">
    <reaction evidence="1">
        <text>a (3R)-hydroxyacyl-[ACP] + UDP-N-acetyl-alpha-D-glucosamine = a UDP-3-O-[(3R)-3-hydroxyacyl]-N-acetyl-alpha-D-glucosamine + holo-[ACP]</text>
        <dbReference type="Rhea" id="RHEA:67812"/>
        <dbReference type="Rhea" id="RHEA-COMP:9685"/>
        <dbReference type="Rhea" id="RHEA-COMP:9945"/>
        <dbReference type="ChEBI" id="CHEBI:57705"/>
        <dbReference type="ChEBI" id="CHEBI:64479"/>
        <dbReference type="ChEBI" id="CHEBI:78827"/>
        <dbReference type="ChEBI" id="CHEBI:173225"/>
        <dbReference type="EC" id="2.3.1.129"/>
    </reaction>
</comment>
<comment type="pathway">
    <text evidence="1">Glycolipid biosynthesis; lipid IV(A) biosynthesis; lipid IV(A) from (3R)-3-hydroxytetradecanoyl-[acyl-carrier-protein] and UDP-N-acetyl-alpha-D-glucosamine: step 1/6.</text>
</comment>
<comment type="subunit">
    <text evidence="1">Homotrimer.</text>
</comment>
<comment type="subcellular location">
    <subcellularLocation>
        <location evidence="1">Cytoplasm</location>
    </subcellularLocation>
</comment>
<comment type="similarity">
    <text evidence="1">Belongs to the transferase hexapeptide repeat family. LpxA subfamily.</text>
</comment>